<comment type="similarity">
    <text evidence="1">Belongs to the UPF0300 family.</text>
</comment>
<protein>
    <recommendedName>
        <fullName>Meiotic expression up-regulated protein 27</fullName>
    </recommendedName>
</protein>
<gene>
    <name type="primary">meu27</name>
    <name type="ORF">SPCC1259.14c</name>
</gene>
<evidence type="ECO:0000305" key="1"/>
<name>MEU27_SCHPO</name>
<proteinExistence type="evidence at transcript level"/>
<feature type="chain" id="PRO_0000118856" description="Meiotic expression up-regulated protein 27">
    <location>
        <begin position="1"/>
        <end position="736"/>
    </location>
</feature>
<keyword id="KW-0469">Meiosis</keyword>
<keyword id="KW-1185">Reference proteome</keyword>
<organism>
    <name type="scientific">Schizosaccharomyces pombe (strain 972 / ATCC 24843)</name>
    <name type="common">Fission yeast</name>
    <dbReference type="NCBI Taxonomy" id="284812"/>
    <lineage>
        <taxon>Eukaryota</taxon>
        <taxon>Fungi</taxon>
        <taxon>Dikarya</taxon>
        <taxon>Ascomycota</taxon>
        <taxon>Taphrinomycotina</taxon>
        <taxon>Schizosaccharomycetes</taxon>
        <taxon>Schizosaccharomycetales</taxon>
        <taxon>Schizosaccharomycetaceae</taxon>
        <taxon>Schizosaccharomyces</taxon>
    </lineage>
</organism>
<dbReference type="EMBL" id="CU329672">
    <property type="protein sequence ID" value="CAA22552.1"/>
    <property type="molecule type" value="Genomic_DNA"/>
</dbReference>
<dbReference type="EMBL" id="AB054311">
    <property type="protein sequence ID" value="BAB60878.1"/>
    <property type="molecule type" value="mRNA"/>
</dbReference>
<dbReference type="PIR" id="T40904">
    <property type="entry name" value="T40904"/>
</dbReference>
<dbReference type="RefSeq" id="NP_588071.1">
    <property type="nucleotide sequence ID" value="NM_001023063.2"/>
</dbReference>
<dbReference type="BioGRID" id="275450">
    <property type="interactions" value="23"/>
</dbReference>
<dbReference type="STRING" id="284812.O94713"/>
<dbReference type="iPTMnet" id="O94713"/>
<dbReference type="PaxDb" id="4896-SPCC1259.14c.1"/>
<dbReference type="EnsemblFungi" id="SPCC1259.14c.1">
    <property type="protein sequence ID" value="SPCC1259.14c.1:pep"/>
    <property type="gene ID" value="SPCC1259.14c"/>
</dbReference>
<dbReference type="GeneID" id="2538871"/>
<dbReference type="KEGG" id="spo:2538871"/>
<dbReference type="PomBase" id="SPCC1259.14c">
    <property type="gene designation" value="meu27"/>
</dbReference>
<dbReference type="VEuPathDB" id="FungiDB:SPCC1259.14c"/>
<dbReference type="HOGENOM" id="CLU_376893_0_0_1"/>
<dbReference type="InParanoid" id="O94713"/>
<dbReference type="PRO" id="PR:O94713"/>
<dbReference type="Proteomes" id="UP000002485">
    <property type="component" value="Chromosome III"/>
</dbReference>
<dbReference type="GO" id="GO:0051321">
    <property type="term" value="P:meiotic cell cycle"/>
    <property type="evidence" value="ECO:0007669"/>
    <property type="project" value="UniProtKB-KW"/>
</dbReference>
<dbReference type="InterPro" id="IPR013903">
    <property type="entry name" value="Meiotic_expression"/>
</dbReference>
<dbReference type="Pfam" id="PF08594">
    <property type="entry name" value="UPF0300"/>
    <property type="match status" value="1"/>
</dbReference>
<accession>O94713</accession>
<accession>Q96WR8</accession>
<reference key="1">
    <citation type="journal article" date="2002" name="Nature">
        <title>The genome sequence of Schizosaccharomyces pombe.</title>
        <authorList>
            <person name="Wood V."/>
            <person name="Gwilliam R."/>
            <person name="Rajandream M.A."/>
            <person name="Lyne M.H."/>
            <person name="Lyne R."/>
            <person name="Stewart A."/>
            <person name="Sgouros J.G."/>
            <person name="Peat N."/>
            <person name="Hayles J."/>
            <person name="Baker S.G."/>
            <person name="Basham D."/>
            <person name="Bowman S."/>
            <person name="Brooks K."/>
            <person name="Brown D."/>
            <person name="Brown S."/>
            <person name="Chillingworth T."/>
            <person name="Churcher C.M."/>
            <person name="Collins M."/>
            <person name="Connor R."/>
            <person name="Cronin A."/>
            <person name="Davis P."/>
            <person name="Feltwell T."/>
            <person name="Fraser A."/>
            <person name="Gentles S."/>
            <person name="Goble A."/>
            <person name="Hamlin N."/>
            <person name="Harris D.E."/>
            <person name="Hidalgo J."/>
            <person name="Hodgson G."/>
            <person name="Holroyd S."/>
            <person name="Hornsby T."/>
            <person name="Howarth S."/>
            <person name="Huckle E.J."/>
            <person name="Hunt S."/>
            <person name="Jagels K."/>
            <person name="James K.D."/>
            <person name="Jones L."/>
            <person name="Jones M."/>
            <person name="Leather S."/>
            <person name="McDonald S."/>
            <person name="McLean J."/>
            <person name="Mooney P."/>
            <person name="Moule S."/>
            <person name="Mungall K.L."/>
            <person name="Murphy L.D."/>
            <person name="Niblett D."/>
            <person name="Odell C."/>
            <person name="Oliver K."/>
            <person name="O'Neil S."/>
            <person name="Pearson D."/>
            <person name="Quail M.A."/>
            <person name="Rabbinowitsch E."/>
            <person name="Rutherford K.M."/>
            <person name="Rutter S."/>
            <person name="Saunders D."/>
            <person name="Seeger K."/>
            <person name="Sharp S."/>
            <person name="Skelton J."/>
            <person name="Simmonds M.N."/>
            <person name="Squares R."/>
            <person name="Squares S."/>
            <person name="Stevens K."/>
            <person name="Taylor K."/>
            <person name="Taylor R.G."/>
            <person name="Tivey A."/>
            <person name="Walsh S.V."/>
            <person name="Warren T."/>
            <person name="Whitehead S."/>
            <person name="Woodward J.R."/>
            <person name="Volckaert G."/>
            <person name="Aert R."/>
            <person name="Robben J."/>
            <person name="Grymonprez B."/>
            <person name="Weltjens I."/>
            <person name="Vanstreels E."/>
            <person name="Rieger M."/>
            <person name="Schaefer M."/>
            <person name="Mueller-Auer S."/>
            <person name="Gabel C."/>
            <person name="Fuchs M."/>
            <person name="Duesterhoeft A."/>
            <person name="Fritzc C."/>
            <person name="Holzer E."/>
            <person name="Moestl D."/>
            <person name="Hilbert H."/>
            <person name="Borzym K."/>
            <person name="Langer I."/>
            <person name="Beck A."/>
            <person name="Lehrach H."/>
            <person name="Reinhardt R."/>
            <person name="Pohl T.M."/>
            <person name="Eger P."/>
            <person name="Zimmermann W."/>
            <person name="Wedler H."/>
            <person name="Wambutt R."/>
            <person name="Purnelle B."/>
            <person name="Goffeau A."/>
            <person name="Cadieu E."/>
            <person name="Dreano S."/>
            <person name="Gloux S."/>
            <person name="Lelaure V."/>
            <person name="Mottier S."/>
            <person name="Galibert F."/>
            <person name="Aves S.J."/>
            <person name="Xiang Z."/>
            <person name="Hunt C."/>
            <person name="Moore K."/>
            <person name="Hurst S.M."/>
            <person name="Lucas M."/>
            <person name="Rochet M."/>
            <person name="Gaillardin C."/>
            <person name="Tallada V.A."/>
            <person name="Garzon A."/>
            <person name="Thode G."/>
            <person name="Daga R.R."/>
            <person name="Cruzado L."/>
            <person name="Jimenez J."/>
            <person name="Sanchez M."/>
            <person name="del Rey F."/>
            <person name="Benito J."/>
            <person name="Dominguez A."/>
            <person name="Revuelta J.L."/>
            <person name="Moreno S."/>
            <person name="Armstrong J."/>
            <person name="Forsburg S.L."/>
            <person name="Cerutti L."/>
            <person name="Lowe T."/>
            <person name="McCombie W.R."/>
            <person name="Paulsen I."/>
            <person name="Potashkin J."/>
            <person name="Shpakovski G.V."/>
            <person name="Ussery D."/>
            <person name="Barrell B.G."/>
            <person name="Nurse P."/>
        </authorList>
    </citation>
    <scope>NUCLEOTIDE SEQUENCE [LARGE SCALE GENOMIC DNA]</scope>
    <source>
        <strain>972 / ATCC 24843</strain>
    </source>
</reference>
<reference key="2">
    <citation type="journal article" date="2001" name="Nucleic Acids Res.">
        <title>Comprehensive isolation of meiosis-specific genes identifies novel proteins and unusual non-coding transcripts in Schizosaccharomyces pombe.</title>
        <authorList>
            <person name="Watanabe T."/>
            <person name="Miyashita K."/>
            <person name="Saito T.T."/>
            <person name="Yoneki T."/>
            <person name="Kakihara Y."/>
            <person name="Nabeshima K."/>
            <person name="Kishi Y.A."/>
            <person name="Shimoda C."/>
            <person name="Nojima H."/>
        </authorList>
    </citation>
    <scope>NUCLEOTIDE SEQUENCE [MRNA] OF 477-736</scope>
    <source>
        <strain>CD16-1</strain>
    </source>
</reference>
<sequence>MNSKIAYPEIKISGAFRPDKIQEKGKSNRCDTHCSGSSWTSFKSKILKICAPLCCMGSDNDESMAEMPLEPQVEPKSIENNYTLKKKNEEGFLSQQENKSSNQNPSKANNLFDKLGVSKPITFIACILQLGGTSFMESELQTKLSTINSSPFKSLSQYWNAAYNKKESISSSTNSNIKLHLAARKYQTKPEKFNENSSISQVTSAIKATKAFSHLTQPKRALLKESNTGDKDIFKPRYPQLLSCRFTTLSKLAPINNSKSAPKGTHKPNHSENAELKDIKQSSELSDLSLSSQILYPESTTLSEISPIYDSELAIENILESKCFENEQAIIEGVKDFTEFPDLEETQIIYSDLIASSEVSPIYDSELKYESVLESKSSRNEQATIKEKKDNERVLDLSQQCTKFLFSDQKVITPSFCKFAQVSDMCSTEIPWVNFFCDNLDICIEDVQFKSKAFFPPTVTITIFEHEDKNLMNVFDTKNGTSKTLVKPQITNSCLENMLSLVNKNSCIKRLHLKLSKGIMDIKVLTHQLMLYDLYPPAHQTYLWKALERLVNEKVSLGELTPVHKVAAEKRIGDIRMHLIESSDIYVVTENHRWLHIVCEGFNCFLELPEVLHGKKFLKVDEATREDMLMSAETPDDILWITTLISTGSSMSHFPLHAYLEAKERQEFTKKNLLLFCKEDEFLYSDQENEDLLESFERVISEELSLLKSNEPSDISLKKRKRRKNCEKRILGTMMY</sequence>